<organism>
    <name type="scientific">Pseudomonas aeruginosa (strain UCBPP-PA14)</name>
    <dbReference type="NCBI Taxonomy" id="208963"/>
    <lineage>
        <taxon>Bacteria</taxon>
        <taxon>Pseudomonadati</taxon>
        <taxon>Pseudomonadota</taxon>
        <taxon>Gammaproteobacteria</taxon>
        <taxon>Pseudomonadales</taxon>
        <taxon>Pseudomonadaceae</taxon>
        <taxon>Pseudomonas</taxon>
    </lineage>
</organism>
<accession>Q02U51</accession>
<keyword id="KW-0067">ATP-binding</keyword>
<keyword id="KW-0173">Coenzyme A biosynthesis</keyword>
<keyword id="KW-0963">Cytoplasm</keyword>
<keyword id="KW-0460">Magnesium</keyword>
<keyword id="KW-0547">Nucleotide-binding</keyword>
<keyword id="KW-0548">Nucleotidyltransferase</keyword>
<keyword id="KW-0808">Transferase</keyword>
<evidence type="ECO:0000255" key="1">
    <source>
        <dbReference type="HAMAP-Rule" id="MF_00151"/>
    </source>
</evidence>
<name>COAD_PSEAB</name>
<gene>
    <name evidence="1" type="primary">coaD</name>
    <name type="ordered locus">PA14_04760</name>
</gene>
<sequence length="159" mass="17771">MNRVLYPGTFDPITKGHGDLIERASRLFDHVIIAVAASPKKNPLFSLEQRVALAQEVTKHLPNVEVVGFSTLLAHFVKEQKANVFLRGLRAVSDFEYEFQLANMNRQLAPDVESMFLTPSEKYSFISSTLVREIAALGGDISKFVHPAVADALAERFKR</sequence>
<reference key="1">
    <citation type="journal article" date="2006" name="Genome Biol.">
        <title>Genomic analysis reveals that Pseudomonas aeruginosa virulence is combinatorial.</title>
        <authorList>
            <person name="Lee D.G."/>
            <person name="Urbach J.M."/>
            <person name="Wu G."/>
            <person name="Liberati N.T."/>
            <person name="Feinbaum R.L."/>
            <person name="Miyata S."/>
            <person name="Diggins L.T."/>
            <person name="He J."/>
            <person name="Saucier M."/>
            <person name="Deziel E."/>
            <person name="Friedman L."/>
            <person name="Li L."/>
            <person name="Grills G."/>
            <person name="Montgomery K."/>
            <person name="Kucherlapati R."/>
            <person name="Rahme L.G."/>
            <person name="Ausubel F.M."/>
        </authorList>
    </citation>
    <scope>NUCLEOTIDE SEQUENCE [LARGE SCALE GENOMIC DNA]</scope>
    <source>
        <strain>UCBPP-PA14</strain>
    </source>
</reference>
<protein>
    <recommendedName>
        <fullName evidence="1">Phosphopantetheine adenylyltransferase</fullName>
        <ecNumber evidence="1">2.7.7.3</ecNumber>
    </recommendedName>
    <alternativeName>
        <fullName evidence="1">Dephospho-CoA pyrophosphorylase</fullName>
    </alternativeName>
    <alternativeName>
        <fullName evidence="1">Pantetheine-phosphate adenylyltransferase</fullName>
        <shortName evidence="1">PPAT</shortName>
    </alternativeName>
</protein>
<feature type="chain" id="PRO_1000011205" description="Phosphopantetheine adenylyltransferase">
    <location>
        <begin position="1"/>
        <end position="159"/>
    </location>
</feature>
<feature type="binding site" evidence="1">
    <location>
        <begin position="9"/>
        <end position="10"/>
    </location>
    <ligand>
        <name>ATP</name>
        <dbReference type="ChEBI" id="CHEBI:30616"/>
    </ligand>
</feature>
<feature type="binding site" evidence="1">
    <location>
        <position position="9"/>
    </location>
    <ligand>
        <name>substrate</name>
    </ligand>
</feature>
<feature type="binding site" evidence="1">
    <location>
        <position position="17"/>
    </location>
    <ligand>
        <name>ATP</name>
        <dbReference type="ChEBI" id="CHEBI:30616"/>
    </ligand>
</feature>
<feature type="binding site" evidence="1">
    <location>
        <position position="41"/>
    </location>
    <ligand>
        <name>substrate</name>
    </ligand>
</feature>
<feature type="binding site" evidence="1">
    <location>
        <position position="73"/>
    </location>
    <ligand>
        <name>substrate</name>
    </ligand>
</feature>
<feature type="binding site" evidence="1">
    <location>
        <position position="87"/>
    </location>
    <ligand>
        <name>substrate</name>
    </ligand>
</feature>
<feature type="binding site" evidence="1">
    <location>
        <begin position="88"/>
        <end position="90"/>
    </location>
    <ligand>
        <name>ATP</name>
        <dbReference type="ChEBI" id="CHEBI:30616"/>
    </ligand>
</feature>
<feature type="binding site" evidence="1">
    <location>
        <position position="98"/>
    </location>
    <ligand>
        <name>ATP</name>
        <dbReference type="ChEBI" id="CHEBI:30616"/>
    </ligand>
</feature>
<feature type="binding site" evidence="1">
    <location>
        <begin position="123"/>
        <end position="129"/>
    </location>
    <ligand>
        <name>ATP</name>
        <dbReference type="ChEBI" id="CHEBI:30616"/>
    </ligand>
</feature>
<feature type="site" description="Transition state stabilizer" evidence="1">
    <location>
        <position position="17"/>
    </location>
</feature>
<proteinExistence type="inferred from homology"/>
<dbReference type="EC" id="2.7.7.3" evidence="1"/>
<dbReference type="EMBL" id="CP000438">
    <property type="protein sequence ID" value="ABJ15328.1"/>
    <property type="molecule type" value="Genomic_DNA"/>
</dbReference>
<dbReference type="RefSeq" id="WP_003084466.1">
    <property type="nucleotide sequence ID" value="NZ_CP034244.1"/>
</dbReference>
<dbReference type="SMR" id="Q02U51"/>
<dbReference type="GeneID" id="77218883"/>
<dbReference type="KEGG" id="pau:PA14_04760"/>
<dbReference type="PseudoCAP" id="PA14_04760"/>
<dbReference type="HOGENOM" id="CLU_100149_0_1_6"/>
<dbReference type="BioCyc" id="PAER208963:G1G74-396-MONOMER"/>
<dbReference type="UniPathway" id="UPA00241">
    <property type="reaction ID" value="UER00355"/>
</dbReference>
<dbReference type="Proteomes" id="UP000000653">
    <property type="component" value="Chromosome"/>
</dbReference>
<dbReference type="GO" id="GO:0005737">
    <property type="term" value="C:cytoplasm"/>
    <property type="evidence" value="ECO:0007669"/>
    <property type="project" value="UniProtKB-SubCell"/>
</dbReference>
<dbReference type="GO" id="GO:0008771">
    <property type="term" value="F:[citrate (pro-3S)-lyase] ligase activity"/>
    <property type="evidence" value="ECO:0007669"/>
    <property type="project" value="InterPro"/>
</dbReference>
<dbReference type="GO" id="GO:0005524">
    <property type="term" value="F:ATP binding"/>
    <property type="evidence" value="ECO:0007669"/>
    <property type="project" value="UniProtKB-KW"/>
</dbReference>
<dbReference type="GO" id="GO:0004595">
    <property type="term" value="F:pantetheine-phosphate adenylyltransferase activity"/>
    <property type="evidence" value="ECO:0007669"/>
    <property type="project" value="UniProtKB-UniRule"/>
</dbReference>
<dbReference type="GO" id="GO:0015937">
    <property type="term" value="P:coenzyme A biosynthetic process"/>
    <property type="evidence" value="ECO:0007669"/>
    <property type="project" value="UniProtKB-UniRule"/>
</dbReference>
<dbReference type="CDD" id="cd02163">
    <property type="entry name" value="PPAT"/>
    <property type="match status" value="1"/>
</dbReference>
<dbReference type="Gene3D" id="3.40.50.620">
    <property type="entry name" value="HUPs"/>
    <property type="match status" value="1"/>
</dbReference>
<dbReference type="HAMAP" id="MF_00151">
    <property type="entry name" value="PPAT_bact"/>
    <property type="match status" value="1"/>
</dbReference>
<dbReference type="InterPro" id="IPR013166">
    <property type="entry name" value="Citrate_lyase_ligase_C"/>
</dbReference>
<dbReference type="InterPro" id="IPR004821">
    <property type="entry name" value="Cyt_trans-like"/>
</dbReference>
<dbReference type="InterPro" id="IPR001980">
    <property type="entry name" value="PPAT"/>
</dbReference>
<dbReference type="InterPro" id="IPR014729">
    <property type="entry name" value="Rossmann-like_a/b/a_fold"/>
</dbReference>
<dbReference type="NCBIfam" id="TIGR01510">
    <property type="entry name" value="coaD_prev_kdtB"/>
    <property type="match status" value="1"/>
</dbReference>
<dbReference type="NCBIfam" id="TIGR00125">
    <property type="entry name" value="cyt_tran_rel"/>
    <property type="match status" value="1"/>
</dbReference>
<dbReference type="PANTHER" id="PTHR21342">
    <property type="entry name" value="PHOSPHOPANTETHEINE ADENYLYLTRANSFERASE"/>
    <property type="match status" value="1"/>
</dbReference>
<dbReference type="PANTHER" id="PTHR21342:SF1">
    <property type="entry name" value="PHOSPHOPANTETHEINE ADENYLYLTRANSFERASE"/>
    <property type="match status" value="1"/>
</dbReference>
<dbReference type="Pfam" id="PF01467">
    <property type="entry name" value="CTP_transf_like"/>
    <property type="match status" value="1"/>
</dbReference>
<dbReference type="PRINTS" id="PR01020">
    <property type="entry name" value="LPSBIOSNTHSS"/>
</dbReference>
<dbReference type="SMART" id="SM00764">
    <property type="entry name" value="Citrate_ly_lig"/>
    <property type="match status" value="1"/>
</dbReference>
<dbReference type="SUPFAM" id="SSF52374">
    <property type="entry name" value="Nucleotidylyl transferase"/>
    <property type="match status" value="1"/>
</dbReference>
<comment type="function">
    <text evidence="1">Reversibly transfers an adenylyl group from ATP to 4'-phosphopantetheine, yielding dephospho-CoA (dPCoA) and pyrophosphate.</text>
</comment>
<comment type="catalytic activity">
    <reaction evidence="1">
        <text>(R)-4'-phosphopantetheine + ATP + H(+) = 3'-dephospho-CoA + diphosphate</text>
        <dbReference type="Rhea" id="RHEA:19801"/>
        <dbReference type="ChEBI" id="CHEBI:15378"/>
        <dbReference type="ChEBI" id="CHEBI:30616"/>
        <dbReference type="ChEBI" id="CHEBI:33019"/>
        <dbReference type="ChEBI" id="CHEBI:57328"/>
        <dbReference type="ChEBI" id="CHEBI:61723"/>
        <dbReference type="EC" id="2.7.7.3"/>
    </reaction>
</comment>
<comment type="cofactor">
    <cofactor evidence="1">
        <name>Mg(2+)</name>
        <dbReference type="ChEBI" id="CHEBI:18420"/>
    </cofactor>
</comment>
<comment type="pathway">
    <text evidence="1">Cofactor biosynthesis; coenzyme A biosynthesis; CoA from (R)-pantothenate: step 4/5.</text>
</comment>
<comment type="subunit">
    <text evidence="1">Homohexamer.</text>
</comment>
<comment type="subcellular location">
    <subcellularLocation>
        <location evidence="1">Cytoplasm</location>
    </subcellularLocation>
</comment>
<comment type="similarity">
    <text evidence="1">Belongs to the bacterial CoaD family.</text>
</comment>